<comment type="function">
    <text>Non-neuronal microtubule-associated protein. Promotes microtubule assembly.</text>
</comment>
<comment type="subunit">
    <text evidence="1 2 5">Interacts with SEPTIN2; this interaction impedes tubulin-binding. Interacts with TRAF3IP1 (PubMed:26487268). Interacts with KNSTRN (By similarity).</text>
</comment>
<comment type="subcellular location">
    <subcellularLocation>
        <location evidence="2">Cytoplasm</location>
        <location evidence="2">Cytoskeleton</location>
    </subcellularLocation>
    <subcellularLocation>
        <location evidence="2">Cytoplasm</location>
        <location evidence="2">Cytoskeleton</location>
        <location evidence="2">Microtubule organizing center</location>
    </subcellularLocation>
    <text evidence="2">Recruitment to microtubule is inhibited by microtubules polyglutamylation.</text>
</comment>
<comment type="alternative products">
    <event type="alternative splicing"/>
    <isoform>
        <id>P27546-1</id>
        <name>1</name>
        <sequence type="displayed"/>
    </isoform>
    <isoform>
        <id>P27546-2</id>
        <name>2</name>
        <sequence type="described" ref="VSP_026097"/>
    </isoform>
    <isoform>
        <id>P27546-3</id>
        <name>3</name>
        <sequence type="described" ref="VSP_026095 VSP_026097"/>
    </isoform>
    <isoform>
        <id>P27546-4</id>
        <name>4</name>
        <sequence type="described" ref="VSP_026089 VSP_026090 VSP_026091 VSP_026092 VSP_026093 VSP_026094 VSP_026095 VSP_026096 VSP_026097"/>
    </isoform>
</comment>
<comment type="tissue specificity">
    <text>Testis, striated and cardiac muscle.</text>
</comment>
<comment type="PTM">
    <text evidence="1">Phosphorylated at serine residues in K-X-G-S motifs by MAP/microtubule affinity-regulating kinase (MARK1 or MARK2), causing detachment from microtubules, and their disassembly (By similarity). Phosphorylation on Ser-760 negatively regulates MAP4 activity to promote microtubule assembly. Isoform 4 is phosphorylated on Ser-333 and Ser-334 (By similarity).</text>
</comment>
<comment type="sequence caution" evidence="8">
    <conflict type="erroneous initiation">
        <sequence resource="EMBL-CDS" id="AAH42645"/>
    </conflict>
    <text>Truncated N-terminus.</text>
</comment>
<comment type="sequence caution" evidence="8">
    <conflict type="erroneous initiation">
        <sequence resource="EMBL-CDS" id="BAE27434"/>
    </conflict>
    <text>Extended N-terminus.</text>
</comment>
<reference key="1">
    <citation type="journal article" date="1991" name="J. Biol. Chem.">
        <title>A model for microtubule-associated protein 4 structure. Domains defined by comparisons of human, mouse, and bovine sequences.</title>
        <authorList>
            <person name="West R.R."/>
            <person name="Tenbarge K.M."/>
            <person name="Olmsted J.B."/>
        </authorList>
    </citation>
    <scope>NUCLEOTIDE SEQUENCE [MRNA] (ISOFORM 1)</scope>
</reference>
<reference key="2">
    <citation type="journal article" date="2005" name="Science">
        <title>The transcriptional landscape of the mammalian genome.</title>
        <authorList>
            <person name="Carninci P."/>
            <person name="Kasukawa T."/>
            <person name="Katayama S."/>
            <person name="Gough J."/>
            <person name="Frith M.C."/>
            <person name="Maeda N."/>
            <person name="Oyama R."/>
            <person name="Ravasi T."/>
            <person name="Lenhard B."/>
            <person name="Wells C."/>
            <person name="Kodzius R."/>
            <person name="Shimokawa K."/>
            <person name="Bajic V.B."/>
            <person name="Brenner S.E."/>
            <person name="Batalov S."/>
            <person name="Forrest A.R."/>
            <person name="Zavolan M."/>
            <person name="Davis M.J."/>
            <person name="Wilming L.G."/>
            <person name="Aidinis V."/>
            <person name="Allen J.E."/>
            <person name="Ambesi-Impiombato A."/>
            <person name="Apweiler R."/>
            <person name="Aturaliya R.N."/>
            <person name="Bailey T.L."/>
            <person name="Bansal M."/>
            <person name="Baxter L."/>
            <person name="Beisel K.W."/>
            <person name="Bersano T."/>
            <person name="Bono H."/>
            <person name="Chalk A.M."/>
            <person name="Chiu K.P."/>
            <person name="Choudhary V."/>
            <person name="Christoffels A."/>
            <person name="Clutterbuck D.R."/>
            <person name="Crowe M.L."/>
            <person name="Dalla E."/>
            <person name="Dalrymple B.P."/>
            <person name="de Bono B."/>
            <person name="Della Gatta G."/>
            <person name="di Bernardo D."/>
            <person name="Down T."/>
            <person name="Engstrom P."/>
            <person name="Fagiolini M."/>
            <person name="Faulkner G."/>
            <person name="Fletcher C.F."/>
            <person name="Fukushima T."/>
            <person name="Furuno M."/>
            <person name="Futaki S."/>
            <person name="Gariboldi M."/>
            <person name="Georgii-Hemming P."/>
            <person name="Gingeras T.R."/>
            <person name="Gojobori T."/>
            <person name="Green R.E."/>
            <person name="Gustincich S."/>
            <person name="Harbers M."/>
            <person name="Hayashi Y."/>
            <person name="Hensch T.K."/>
            <person name="Hirokawa N."/>
            <person name="Hill D."/>
            <person name="Huminiecki L."/>
            <person name="Iacono M."/>
            <person name="Ikeo K."/>
            <person name="Iwama A."/>
            <person name="Ishikawa T."/>
            <person name="Jakt M."/>
            <person name="Kanapin A."/>
            <person name="Katoh M."/>
            <person name="Kawasawa Y."/>
            <person name="Kelso J."/>
            <person name="Kitamura H."/>
            <person name="Kitano H."/>
            <person name="Kollias G."/>
            <person name="Krishnan S.P."/>
            <person name="Kruger A."/>
            <person name="Kummerfeld S.K."/>
            <person name="Kurochkin I.V."/>
            <person name="Lareau L.F."/>
            <person name="Lazarevic D."/>
            <person name="Lipovich L."/>
            <person name="Liu J."/>
            <person name="Liuni S."/>
            <person name="McWilliam S."/>
            <person name="Madan Babu M."/>
            <person name="Madera M."/>
            <person name="Marchionni L."/>
            <person name="Matsuda H."/>
            <person name="Matsuzawa S."/>
            <person name="Miki H."/>
            <person name="Mignone F."/>
            <person name="Miyake S."/>
            <person name="Morris K."/>
            <person name="Mottagui-Tabar S."/>
            <person name="Mulder N."/>
            <person name="Nakano N."/>
            <person name="Nakauchi H."/>
            <person name="Ng P."/>
            <person name="Nilsson R."/>
            <person name="Nishiguchi S."/>
            <person name="Nishikawa S."/>
            <person name="Nori F."/>
            <person name="Ohara O."/>
            <person name="Okazaki Y."/>
            <person name="Orlando V."/>
            <person name="Pang K.C."/>
            <person name="Pavan W.J."/>
            <person name="Pavesi G."/>
            <person name="Pesole G."/>
            <person name="Petrovsky N."/>
            <person name="Piazza S."/>
            <person name="Reed J."/>
            <person name="Reid J.F."/>
            <person name="Ring B.Z."/>
            <person name="Ringwald M."/>
            <person name="Rost B."/>
            <person name="Ruan Y."/>
            <person name="Salzberg S.L."/>
            <person name="Sandelin A."/>
            <person name="Schneider C."/>
            <person name="Schoenbach C."/>
            <person name="Sekiguchi K."/>
            <person name="Semple C.A."/>
            <person name="Seno S."/>
            <person name="Sessa L."/>
            <person name="Sheng Y."/>
            <person name="Shibata Y."/>
            <person name="Shimada H."/>
            <person name="Shimada K."/>
            <person name="Silva D."/>
            <person name="Sinclair B."/>
            <person name="Sperling S."/>
            <person name="Stupka E."/>
            <person name="Sugiura K."/>
            <person name="Sultana R."/>
            <person name="Takenaka Y."/>
            <person name="Taki K."/>
            <person name="Tammoja K."/>
            <person name="Tan S.L."/>
            <person name="Tang S."/>
            <person name="Taylor M.S."/>
            <person name="Tegner J."/>
            <person name="Teichmann S.A."/>
            <person name="Ueda H.R."/>
            <person name="van Nimwegen E."/>
            <person name="Verardo R."/>
            <person name="Wei C.L."/>
            <person name="Yagi K."/>
            <person name="Yamanishi H."/>
            <person name="Zabarovsky E."/>
            <person name="Zhu S."/>
            <person name="Zimmer A."/>
            <person name="Hide W."/>
            <person name="Bult C."/>
            <person name="Grimmond S.M."/>
            <person name="Teasdale R.D."/>
            <person name="Liu E.T."/>
            <person name="Brusic V."/>
            <person name="Quackenbush J."/>
            <person name="Wahlestedt C."/>
            <person name="Mattick J.S."/>
            <person name="Hume D.A."/>
            <person name="Kai C."/>
            <person name="Sasaki D."/>
            <person name="Tomaru Y."/>
            <person name="Fukuda S."/>
            <person name="Kanamori-Katayama M."/>
            <person name="Suzuki M."/>
            <person name="Aoki J."/>
            <person name="Arakawa T."/>
            <person name="Iida J."/>
            <person name="Imamura K."/>
            <person name="Itoh M."/>
            <person name="Kato T."/>
            <person name="Kawaji H."/>
            <person name="Kawagashira N."/>
            <person name="Kawashima T."/>
            <person name="Kojima M."/>
            <person name="Kondo S."/>
            <person name="Konno H."/>
            <person name="Nakano K."/>
            <person name="Ninomiya N."/>
            <person name="Nishio T."/>
            <person name="Okada M."/>
            <person name="Plessy C."/>
            <person name="Shibata K."/>
            <person name="Shiraki T."/>
            <person name="Suzuki S."/>
            <person name="Tagami M."/>
            <person name="Waki K."/>
            <person name="Watahiki A."/>
            <person name="Okamura-Oho Y."/>
            <person name="Suzuki H."/>
            <person name="Kawai J."/>
            <person name="Hayashizaki Y."/>
        </authorList>
    </citation>
    <scope>NUCLEOTIDE SEQUENCE [LARGE SCALE MRNA] (ISOFORM 4)</scope>
    <source>
        <strain>C57BL/6J</strain>
        <tissue>Heart</tissue>
        <tissue>Hypothalamus</tissue>
        <tissue>Olfactory bulb</tissue>
    </source>
</reference>
<reference key="3">
    <citation type="journal article" date="2004" name="Genome Res.">
        <title>The status, quality, and expansion of the NIH full-length cDNA project: the Mammalian Gene Collection (MGC).</title>
        <authorList>
            <consortium name="The MGC Project Team"/>
        </authorList>
    </citation>
    <scope>NUCLEOTIDE SEQUENCE [LARGE SCALE MRNA] (ISOFORMS 1; 2; 3 AND 4)</scope>
    <source>
        <strain>C3H/He</strain>
        <strain>C57BL/6J</strain>
        <tissue>Brain</tissue>
        <tissue>Eye</tissue>
        <tissue>Osteoblast</tissue>
    </source>
</reference>
<reference key="4">
    <citation type="journal article" date="2004" name="Mol. Cell. Proteomics">
        <title>Phosphoproteomic analysis of the developing mouse brain.</title>
        <authorList>
            <person name="Ballif B.A."/>
            <person name="Villen J."/>
            <person name="Beausoleil S.A."/>
            <person name="Schwartz D."/>
            <person name="Gygi S.P."/>
        </authorList>
    </citation>
    <scope>PHOSPHORYLATION [LARGE SCALE ANALYSIS] AT SER-475 AND SER-617</scope>
    <scope>IDENTIFICATION BY MASS SPECTROMETRY [LARGE SCALE ANALYSIS]</scope>
    <source>
        <tissue>Embryonic brain</tissue>
    </source>
</reference>
<reference key="5">
    <citation type="journal article" date="2006" name="Mol. Cell. Proteomics">
        <title>Comprehensive identification of phosphorylation sites in postsynaptic density preparations.</title>
        <authorList>
            <person name="Trinidad J.C."/>
            <person name="Specht C.G."/>
            <person name="Thalhammer A."/>
            <person name="Schoepfer R."/>
            <person name="Burlingame A.L."/>
        </authorList>
    </citation>
    <scope>IDENTIFICATION BY MASS SPECTROMETRY [LARGE SCALE ANALYSIS]</scope>
    <source>
        <tissue>Brain</tissue>
    </source>
</reference>
<reference key="6">
    <citation type="journal article" date="2007" name="Proc. Natl. Acad. Sci. U.S.A.">
        <title>Large-scale phosphorylation analysis of mouse liver.</title>
        <authorList>
            <person name="Villen J."/>
            <person name="Beausoleil S.A."/>
            <person name="Gerber S.A."/>
            <person name="Gygi S.P."/>
        </authorList>
    </citation>
    <scope>PHOSPHORYLATION [LARGE SCALE ANALYSIS] AT SER-475; THR-503; SER-506; SER-517 AND SER-1046</scope>
    <scope>IDENTIFICATION BY MASS SPECTROMETRY [LARGE SCALE ANALYSIS]</scope>
    <source>
        <tissue>Liver</tissue>
    </source>
</reference>
<reference key="7">
    <citation type="journal article" date="2009" name="Immunity">
        <title>The phagosomal proteome in interferon-gamma-activated macrophages.</title>
        <authorList>
            <person name="Trost M."/>
            <person name="English L."/>
            <person name="Lemieux S."/>
            <person name="Courcelles M."/>
            <person name="Desjardins M."/>
            <person name="Thibault P."/>
        </authorList>
    </citation>
    <scope>PHOSPHORYLATION [LARGE SCALE ANALYSIS] AT SER-475 AND SER-517</scope>
    <scope>IDENTIFICATION BY MASS SPECTROMETRY [LARGE SCALE ANALYSIS]</scope>
</reference>
<reference key="8">
    <citation type="journal article" date="2009" name="Mol. Cell. Proteomics">
        <title>Large scale localization of protein phosphorylation by use of electron capture dissociation mass spectrometry.</title>
        <authorList>
            <person name="Sweet S.M."/>
            <person name="Bailey C.M."/>
            <person name="Cunningham D.L."/>
            <person name="Heath J.K."/>
            <person name="Cooper H.J."/>
        </authorList>
    </citation>
    <scope>PHOSPHORYLATION [LARGE SCALE ANALYSIS] AT SER-475 AND SER-667</scope>
    <scope>IDENTIFICATION BY MASS SPECTROMETRY [LARGE SCALE ANALYSIS]</scope>
    <source>
        <tissue>Embryonic fibroblast</tissue>
    </source>
</reference>
<reference key="9">
    <citation type="journal article" date="2010" name="Cell">
        <title>A tissue-specific atlas of mouse protein phosphorylation and expression.</title>
        <authorList>
            <person name="Huttlin E.L."/>
            <person name="Jedrychowski M.P."/>
            <person name="Elias J.E."/>
            <person name="Goswami T."/>
            <person name="Rad R."/>
            <person name="Beausoleil S.A."/>
            <person name="Villen J."/>
            <person name="Haas W."/>
            <person name="Sowa M.E."/>
            <person name="Gygi S.P."/>
        </authorList>
    </citation>
    <scope>PHOSPHORYLATION [LARGE SCALE ANALYSIS] AT SER-254; THR-260; SER-381; THR-447; SER-475; THR-503; SER-506; THR-511; SER-512; SER-517; SER-598; SER-617; THR-658; SER-667; SER-760; SER-901; SER-914 AND SER-1046</scope>
    <scope>IDENTIFICATION BY MASS SPECTROMETRY [LARGE SCALE ANALYSIS]</scope>
    <source>
        <tissue>Brain</tissue>
        <tissue>Brown adipose tissue</tissue>
        <tissue>Heart</tissue>
        <tissue>Kidney</tissue>
        <tissue>Liver</tissue>
        <tissue>Lung</tissue>
        <tissue>Pancreas</tissue>
        <tissue>Spleen</tissue>
        <tissue>Testis</tissue>
    </source>
</reference>
<reference key="10">
    <citation type="journal article" date="2015" name="Nat. Commun.">
        <title>Mutations in TRAF3IP1/IFT54 reveal a new role for IFT proteins in microtubule stabilization.</title>
        <authorList>
            <person name="Bizet A.A."/>
            <person name="Becker-Heck A."/>
            <person name="Ryan R."/>
            <person name="Weber K."/>
            <person name="Filhol E."/>
            <person name="Krug P."/>
            <person name="Halbritter J."/>
            <person name="Delous M."/>
            <person name="Lasbennes M.C."/>
            <person name="Linghu B."/>
            <person name="Oakeley E.J."/>
            <person name="Zarhrate M."/>
            <person name="Nitschke P."/>
            <person name="Garfa-Traore M."/>
            <person name="Serluca F."/>
            <person name="Yang F."/>
            <person name="Bouwmeester T."/>
            <person name="Pinson L."/>
            <person name="Cassuto E."/>
            <person name="Dubot P."/>
            <person name="Elshakhs N.A."/>
            <person name="Sahel J.A."/>
            <person name="Salomon R."/>
            <person name="Drummond I.A."/>
            <person name="Gubler M.C."/>
            <person name="Antignac C."/>
            <person name="Chibout S."/>
            <person name="Szustakowski J.D."/>
            <person name="Hildebrandt F."/>
            <person name="Lorentzen E."/>
            <person name="Sailer A.W."/>
            <person name="Benmerah A."/>
            <person name="Saint-Mezard P."/>
            <person name="Saunier S."/>
        </authorList>
    </citation>
    <scope>INTERACTION WITH TRAF3IP1</scope>
</reference>
<organism>
    <name type="scientific">Mus musculus</name>
    <name type="common">Mouse</name>
    <dbReference type="NCBI Taxonomy" id="10090"/>
    <lineage>
        <taxon>Eukaryota</taxon>
        <taxon>Metazoa</taxon>
        <taxon>Chordata</taxon>
        <taxon>Craniata</taxon>
        <taxon>Vertebrata</taxon>
        <taxon>Euteleostomi</taxon>
        <taxon>Mammalia</taxon>
        <taxon>Eutheria</taxon>
        <taxon>Euarchontoglires</taxon>
        <taxon>Glires</taxon>
        <taxon>Rodentia</taxon>
        <taxon>Myomorpha</taxon>
        <taxon>Muroidea</taxon>
        <taxon>Muridae</taxon>
        <taxon>Murinae</taxon>
        <taxon>Mus</taxon>
        <taxon>Mus</taxon>
    </lineage>
</organism>
<feature type="initiator methionine" description="Removed" evidence="2">
    <location>
        <position position="1"/>
    </location>
</feature>
<feature type="chain" id="PRO_0000072752" description="Microtubule-associated protein 4">
    <location>
        <begin position="2"/>
        <end position="1125"/>
    </location>
</feature>
<feature type="repeat" description="Tau/MAP 1">
    <location>
        <begin position="896"/>
        <end position="926"/>
    </location>
</feature>
<feature type="repeat" description="Tau/MAP 2">
    <location>
        <begin position="965"/>
        <end position="995"/>
    </location>
</feature>
<feature type="repeat" description="Tau/MAP 3">
    <location>
        <begin position="996"/>
        <end position="1026"/>
    </location>
</feature>
<feature type="repeat" description="Tau/MAP 4">
    <location>
        <begin position="1027"/>
        <end position="1058"/>
    </location>
</feature>
<feature type="region of interest" description="Disordered" evidence="4">
    <location>
        <begin position="49"/>
        <end position="103"/>
    </location>
</feature>
<feature type="region of interest" description="Disordered" evidence="4">
    <location>
        <begin position="245"/>
        <end position="265"/>
    </location>
</feature>
<feature type="region of interest" description="Disordered" evidence="4">
    <location>
        <begin position="315"/>
        <end position="361"/>
    </location>
</feature>
<feature type="region of interest" description="Disordered" evidence="4">
    <location>
        <begin position="455"/>
        <end position="478"/>
    </location>
</feature>
<feature type="region of interest" description="Disordered" evidence="4">
    <location>
        <begin position="508"/>
        <end position="529"/>
    </location>
</feature>
<feature type="region of interest" description="Disordered" evidence="4">
    <location>
        <begin position="563"/>
        <end position="964"/>
    </location>
</feature>
<feature type="region of interest" description="Disordered" evidence="4">
    <location>
        <begin position="1047"/>
        <end position="1125"/>
    </location>
</feature>
<feature type="compositionally biased region" description="Basic and acidic residues" evidence="4">
    <location>
        <begin position="53"/>
        <end position="67"/>
    </location>
</feature>
<feature type="compositionally biased region" description="Low complexity" evidence="4">
    <location>
        <begin position="254"/>
        <end position="265"/>
    </location>
</feature>
<feature type="compositionally biased region" description="Basic and acidic residues" evidence="4">
    <location>
        <begin position="563"/>
        <end position="579"/>
    </location>
</feature>
<feature type="compositionally biased region" description="Polar residues" evidence="4">
    <location>
        <begin position="580"/>
        <end position="593"/>
    </location>
</feature>
<feature type="compositionally biased region" description="Polar residues" evidence="4">
    <location>
        <begin position="676"/>
        <end position="706"/>
    </location>
</feature>
<feature type="compositionally biased region" description="Low complexity" evidence="4">
    <location>
        <begin position="728"/>
        <end position="741"/>
    </location>
</feature>
<feature type="compositionally biased region" description="Basic and acidic residues" evidence="4">
    <location>
        <begin position="742"/>
        <end position="759"/>
    </location>
</feature>
<feature type="compositionally biased region" description="Low complexity" evidence="4">
    <location>
        <begin position="761"/>
        <end position="774"/>
    </location>
</feature>
<feature type="compositionally biased region" description="Polar residues" evidence="4">
    <location>
        <begin position="776"/>
        <end position="801"/>
    </location>
</feature>
<feature type="compositionally biased region" description="Basic and acidic residues" evidence="4">
    <location>
        <begin position="812"/>
        <end position="821"/>
    </location>
</feature>
<feature type="compositionally biased region" description="Polar residues" evidence="4">
    <location>
        <begin position="825"/>
        <end position="849"/>
    </location>
</feature>
<feature type="compositionally biased region" description="Low complexity" evidence="4">
    <location>
        <begin position="1093"/>
        <end position="1104"/>
    </location>
</feature>
<feature type="compositionally biased region" description="Polar residues" evidence="4">
    <location>
        <begin position="1115"/>
        <end position="1125"/>
    </location>
</feature>
<feature type="modified residue" description="N-acetylalanine" evidence="2">
    <location>
        <position position="2"/>
    </location>
</feature>
<feature type="modified residue" description="Phosphoserine" evidence="2">
    <location>
        <position position="5"/>
    </location>
</feature>
<feature type="modified residue" description="Phosphoserine" evidence="2">
    <location>
        <position position="60"/>
    </location>
</feature>
<feature type="modified residue" description="Phosphoserine" evidence="2">
    <location>
        <position position="99"/>
    </location>
</feature>
<feature type="modified residue" description="Phosphoserine" evidence="13">
    <location>
        <position position="254"/>
    </location>
</feature>
<feature type="modified residue" description="Phosphothreonine" evidence="13">
    <location>
        <position position="260"/>
    </location>
</feature>
<feature type="modified residue" description="Phosphothreonine" evidence="2">
    <location>
        <position position="277"/>
    </location>
</feature>
<feature type="modified residue" description="Phosphothreonine" evidence="2">
    <location>
        <position position="349"/>
    </location>
</feature>
<feature type="modified residue" description="Phosphoserine" evidence="13">
    <location>
        <position position="381"/>
    </location>
</feature>
<feature type="modified residue" description="Phosphothreonine" evidence="2">
    <location>
        <position position="410"/>
    </location>
</feature>
<feature type="modified residue" description="Phosphothreonine" evidence="13">
    <location>
        <position position="447"/>
    </location>
</feature>
<feature type="modified residue" description="Phosphoserine" evidence="9 10 11 12 13">
    <location>
        <position position="475"/>
    </location>
</feature>
<feature type="modified residue" description="Phosphothreonine" evidence="2">
    <location>
        <position position="494"/>
    </location>
</feature>
<feature type="modified residue" description="Phosphothreonine" evidence="10 13">
    <location>
        <position position="503"/>
    </location>
</feature>
<feature type="modified residue" description="Phosphoserine" evidence="10 13">
    <location>
        <position position="506"/>
    </location>
</feature>
<feature type="modified residue" description="Phosphothreonine" evidence="13">
    <location>
        <position position="511"/>
    </location>
</feature>
<feature type="modified residue" description="Phosphoserine" evidence="13">
    <location>
        <position position="512"/>
    </location>
</feature>
<feature type="modified residue" description="Phosphoserine" evidence="10 12 13">
    <location>
        <position position="517"/>
    </location>
</feature>
<feature type="modified residue" description="Phosphoserine" evidence="3">
    <location>
        <position position="519"/>
    </location>
</feature>
<feature type="modified residue" description="Phosphoserine" evidence="13">
    <location>
        <position position="598"/>
    </location>
</feature>
<feature type="modified residue" description="Phosphoserine" evidence="9 13">
    <location>
        <position position="617"/>
    </location>
</feature>
<feature type="modified residue" description="Phosphothreonine" evidence="13">
    <location>
        <position position="658"/>
    </location>
</feature>
<feature type="modified residue" description="Phosphoserine" evidence="11 13">
    <location>
        <position position="667"/>
    </location>
</feature>
<feature type="modified residue" description="Phosphoserine" evidence="2">
    <location>
        <position position="684"/>
    </location>
</feature>
<feature type="modified residue" description="Phosphoserine" evidence="2">
    <location>
        <position position="694"/>
    </location>
</feature>
<feature type="modified residue" description="Phosphoserine" evidence="13">
    <location>
        <position position="760"/>
    </location>
</feature>
<feature type="modified residue" description="Phosphoserine" evidence="2">
    <location>
        <position position="798"/>
    </location>
</feature>
<feature type="modified residue" description="Phosphoserine" evidence="2">
    <location>
        <position position="826"/>
    </location>
</feature>
<feature type="modified residue" description="Phosphoserine" evidence="13">
    <location>
        <position position="901"/>
    </location>
</feature>
<feature type="modified residue" description="Phosphoserine" evidence="13">
    <location>
        <position position="914"/>
    </location>
</feature>
<feature type="modified residue" description="Phosphothreonine" evidence="2">
    <location>
        <position position="915"/>
    </location>
</feature>
<feature type="modified residue" description="Phosphoserine" evidence="2">
    <location>
        <position position="973"/>
    </location>
</feature>
<feature type="modified residue" description="Phosphoserine" evidence="10 13">
    <location>
        <position position="1046"/>
    </location>
</feature>
<feature type="modified residue" description="Phosphoserine" evidence="2">
    <location>
        <position position="1118"/>
    </location>
</feature>
<feature type="modified residue" description="Phosphoserine" evidence="2">
    <location>
        <position position="1124"/>
    </location>
</feature>
<feature type="cross-link" description="Glycyl lysine isopeptide (Lys-Gly) (interchain with G-Cter in SUMO2)" evidence="2">
    <location>
        <position position="811"/>
    </location>
</feature>
<feature type="splice variant" id="VSP_026089" description="In isoform 4." evidence="6 7">
    <original>MADLSLVDALTEPPPEIEGEIKRDFM</original>
    <variation>MSLPEKQPAALT</variation>
    <location>
        <begin position="1"/>
        <end position="26"/>
    </location>
</feature>
<feature type="splice variant" id="VSP_026090" description="In isoform 4." evidence="6 7">
    <original>EAEPYDDIVGETVEKTEFIPLLDGDEKTGNSESKKKPCLDTSQVEGIPSSKPTLLANGDHGMEGNNTAGSPTDFLEERVDYPDYQSSQNWPEDASFCFQPQQVLDTDQAEPFNEHRDDGLADLLFVSSGPTNASAFTERDNPSEDSYGMLPCDSFASTAVVSQEWSVGAPNSPCSESCVSPEVTIETLQPATELSKAAEVESVKEQLPAKALETMAEQTTDVVHSPSTDT</original>
    <variation>AAEDEQLSKGNPPECGMDSRKEIGQDGFEWQRTEGKLNEIGLNVSMDGQLKDRLVKNSSFLEQNKLGFFEGKLDKELSIEKPNKAYQETSGHLESGYVISGTCQPSEGNLVHQKAAEFHPGLTEGKDKAATVQGKVAGKSGLEIKSQPDLNFPGAADTLTQHGEEQETSAWNANFYSVTQSPQAA</variation>
    <location>
        <begin position="30"/>
        <end position="259"/>
    </location>
</feature>
<feature type="splice variant" id="VSP_026091" description="In isoform 4." evidence="6 7">
    <original>PDTEAALAKDIEEITKPDVILANVTQPSTESDMFLAQDMELLTGTEAAHANNIILPTEPDESSTKDVAPPMEEEIVPGNDTTSPKETETTLPIKMDLAPPEDVLLTKETELAPAKGMVSLSEIEEALAKNDESSAEIPVAQETVVSETEVVLATEVV</original>
    <variation>KEKNGLVSSCSVTGVMSDNSGQLNNKSPLLVAITHPDPTSEHLPTTSPPITMVEFTQENLNAGQDKELEKLRSSEEGPMLDQVPQQKKAIRRALSECYHLSVPPAVNLVDKYPELPAREE</variation>
    <location>
        <begin position="263"/>
        <end position="419"/>
    </location>
</feature>
<feature type="splice variant" id="VSP_026092" description="In isoform 4." evidence="6 7">
    <original>PITTLTKDVTLPLEAERPLVTDMTPSLETEMTLGKETAPPTETNLGMAKDMSPLPESEVTLGKDVVILPETKVAEFNNVTPLSEEEVTSVKDMSPSAETEAPLAKNAD</original>
    <variation>LLPPTSSPMPSPMPRKLGVPAMRRSMTVAEDQSASCRLSAGELASLSASQVPTALTFEEPVAKEREEQIHFSNDSNSSGKKELGIAGLY</variation>
    <location>
        <begin position="424"/>
        <end position="531"/>
    </location>
</feature>
<feature type="splice variant" id="VSP_026093" description="In isoform 4." evidence="6 7">
    <original>GTELIVDNSMAPASDLALPLETKVATVPIKDKGTVQTEEKPREDSQLASMQHKGQSTVPPCTASPEPVKAAEQMSTLPIDAPSPLENLEQK</original>
    <variation>KLEQIPEGSHKGKGQKNTGETRVDSCPFICLGGEKQLMALAGKKEIEVTATQSIPSLLLE</variation>
    <location>
        <begin position="535"/>
        <end position="625"/>
    </location>
</feature>
<feature type="splice variant" id="VSP_026094" description="In isoform 4." evidence="6 7">
    <original>GSQPSEPCS</original>
    <variation>RD</variation>
    <location>
        <begin position="629"/>
        <end position="637"/>
    </location>
</feature>
<feature type="splice variant" id="VSP_026095" description="In isoform 3 and isoform 4." evidence="6 7">
    <location>
        <begin position="927"/>
        <end position="964"/>
    </location>
</feature>
<feature type="splice variant" id="VSP_026096" description="In isoform 4." evidence="6 7">
    <location>
        <begin position="965"/>
        <end position="995"/>
    </location>
</feature>
<feature type="splice variant" id="VSP_026097" description="In isoform 2, isoform 3 and isoform 4." evidence="6 7">
    <original>SI</original>
    <variation>N</variation>
    <location>
        <begin position="1124"/>
        <end position="1125"/>
    </location>
</feature>
<feature type="sequence conflict" description="In Ref. 3; AAH55364." evidence="8" ref="3">
    <original>K</original>
    <variation>E</variation>
    <location>
        <position position="225"/>
    </location>
</feature>
<feature type="sequence conflict" description="In Ref. 3; AAH55364." evidence="8" ref="3">
    <original>V</original>
    <variation>A</variation>
    <location>
        <position position="252"/>
    </location>
</feature>
<feature type="sequence conflict" description="In Ref. 1; AAA16372." evidence="8" ref="1">
    <original>ES</original>
    <variation>VR</variation>
    <location>
        <begin position="394"/>
        <end position="395"/>
    </location>
</feature>
<feature type="sequence conflict" description="In Ref. 3; AAH55332." evidence="8" ref="3">
    <original>T</original>
    <variation>I</variation>
    <location>
        <position position="416"/>
    </location>
</feature>
<feature type="sequence conflict" description="In Ref. 3; AAH55364." evidence="8" ref="3">
    <original>A</original>
    <variation>V</variation>
    <location>
        <position position="955"/>
    </location>
</feature>
<feature type="sequence conflict" description="In Ref. 1; AAA16372." evidence="8" ref="1">
    <original>G</original>
    <variation>V</variation>
    <location>
        <position position="982"/>
    </location>
</feature>
<feature type="sequence conflict" description="In Ref. 1; AAA16372." evidence="8" ref="1">
    <original>G</original>
    <variation>C</variation>
    <location>
        <position position="993"/>
    </location>
</feature>
<feature type="sequence conflict" description="In Ref. 1; AAA16372." evidence="8" ref="1">
    <original>L</original>
    <variation>F</variation>
    <location>
        <position position="1053"/>
    </location>
</feature>
<feature type="sequence conflict" description="In Ref. 3; AAH44654/AAH55364." evidence="8" ref="3">
    <original>K</original>
    <variation>KV</variation>
    <location>
        <position position="1060"/>
    </location>
</feature>
<feature type="sequence conflict" description="In Ref. 1; AAA16372." evidence="8" ref="1">
    <original>A</original>
    <variation>R</variation>
    <location>
        <position position="1089"/>
    </location>
</feature>
<feature type="modified residue" description="Phosphoserine" evidence="8">
    <location sequence="P27546-4">
        <position position="333"/>
    </location>
</feature>
<feature type="modified residue" description="Phosphoserine" evidence="1">
    <location sequence="P27546-4">
        <position position="334"/>
    </location>
</feature>
<feature type="sequence conflict" description="In Ref. 2; BAE23650/BAE22377." evidence="8" ref="2">
    <original>K</original>
    <variation>E</variation>
    <location sequence="P27546-4">
        <position position="435"/>
    </location>
</feature>
<proteinExistence type="evidence at protein level"/>
<dbReference type="EMBL" id="M72414">
    <property type="protein sequence ID" value="AAA16372.1"/>
    <property type="molecule type" value="mRNA"/>
</dbReference>
<dbReference type="EMBL" id="AK134996">
    <property type="protein sequence ID" value="BAE22377.1"/>
    <property type="molecule type" value="mRNA"/>
</dbReference>
<dbReference type="EMBL" id="AK138416">
    <property type="protein sequence ID" value="BAE23650.1"/>
    <property type="molecule type" value="mRNA"/>
</dbReference>
<dbReference type="EMBL" id="AK146790">
    <property type="protein sequence ID" value="BAE27434.1"/>
    <property type="status" value="ALT_INIT"/>
    <property type="molecule type" value="mRNA"/>
</dbReference>
<dbReference type="EMBL" id="BC042645">
    <property type="protein sequence ID" value="AAH42645.1"/>
    <property type="status" value="ALT_INIT"/>
    <property type="molecule type" value="mRNA"/>
</dbReference>
<dbReference type="EMBL" id="BC044654">
    <property type="protein sequence ID" value="AAH44654.1"/>
    <property type="molecule type" value="mRNA"/>
</dbReference>
<dbReference type="EMBL" id="BC050893">
    <property type="protein sequence ID" value="AAH50893.1"/>
    <property type="molecule type" value="mRNA"/>
</dbReference>
<dbReference type="EMBL" id="BC055332">
    <property type="protein sequence ID" value="AAH55332.1"/>
    <property type="molecule type" value="mRNA"/>
</dbReference>
<dbReference type="EMBL" id="BC055364">
    <property type="protein sequence ID" value="AAH55364.1"/>
    <property type="molecule type" value="mRNA"/>
</dbReference>
<dbReference type="CCDS" id="CCDS57704.1">
    <molecule id="P27546-1"/>
</dbReference>
<dbReference type="CCDS" id="CCDS81083.1">
    <molecule id="P27546-4"/>
</dbReference>
<dbReference type="PIR" id="B41206">
    <property type="entry name" value="B41206"/>
</dbReference>
<dbReference type="RefSeq" id="NP_001192259.1">
    <molecule id="P27546-1"/>
    <property type="nucleotide sequence ID" value="NM_001205330.2"/>
</dbReference>
<dbReference type="RefSeq" id="NP_001192261.1">
    <molecule id="P27546-3"/>
    <property type="nucleotide sequence ID" value="NM_001205332.2"/>
</dbReference>
<dbReference type="RefSeq" id="NP_001298092.1">
    <property type="nucleotide sequence ID" value="NM_001311163.1"/>
</dbReference>
<dbReference type="RefSeq" id="NP_001298093.1">
    <property type="nucleotide sequence ID" value="NM_001311164.1"/>
</dbReference>
<dbReference type="RefSeq" id="NP_001407048.1">
    <molecule id="P27546-2"/>
    <property type="nucleotide sequence ID" value="NM_001420119.1"/>
</dbReference>
<dbReference type="RefSeq" id="NP_032659.2">
    <property type="nucleotide sequence ID" value="NM_008633.4"/>
</dbReference>
<dbReference type="RefSeq" id="XP_017168653.1">
    <property type="nucleotide sequence ID" value="XM_017313164.1"/>
</dbReference>
<dbReference type="BioGRID" id="201586">
    <property type="interactions" value="32"/>
</dbReference>
<dbReference type="FunCoup" id="P27546">
    <property type="interactions" value="1410"/>
</dbReference>
<dbReference type="IntAct" id="P27546">
    <property type="interactions" value="15"/>
</dbReference>
<dbReference type="MINT" id="P27546"/>
<dbReference type="STRING" id="10090.ENSMUSP00000035055"/>
<dbReference type="GlyGen" id="P27546">
    <property type="glycosylation" value="4 sites, 2 N-linked glycans (2 sites), 1 O-linked glycan (1 site)"/>
</dbReference>
<dbReference type="iPTMnet" id="P27546"/>
<dbReference type="MetOSite" id="P27546"/>
<dbReference type="PhosphoSitePlus" id="P27546"/>
<dbReference type="SwissPalm" id="P27546"/>
<dbReference type="jPOST" id="P27546"/>
<dbReference type="PaxDb" id="10090-ENSMUSP00000035055"/>
<dbReference type="PeptideAtlas" id="P27546"/>
<dbReference type="ProteomicsDB" id="295779">
    <molecule id="P27546-1"/>
</dbReference>
<dbReference type="ProteomicsDB" id="295780">
    <molecule id="P27546-2"/>
</dbReference>
<dbReference type="ProteomicsDB" id="295781">
    <molecule id="P27546-3"/>
</dbReference>
<dbReference type="ProteomicsDB" id="295782">
    <molecule id="P27546-4"/>
</dbReference>
<dbReference type="Pumba" id="P27546"/>
<dbReference type="Antibodypedia" id="29982">
    <property type="antibodies" value="374 antibodies from 29 providers"/>
</dbReference>
<dbReference type="DNASU" id="17758"/>
<dbReference type="Ensembl" id="ENSMUST00000035055.15">
    <molecule id="P27546-1"/>
    <property type="protein sequence ID" value="ENSMUSP00000035055.11"/>
    <property type="gene ID" value="ENSMUSG00000032479.16"/>
</dbReference>
<dbReference type="Ensembl" id="ENSMUST00000165876.8">
    <molecule id="P27546-2"/>
    <property type="protein sequence ID" value="ENSMUSP00000132662.4"/>
    <property type="gene ID" value="ENSMUSG00000032479.16"/>
</dbReference>
<dbReference type="GeneID" id="17758"/>
<dbReference type="KEGG" id="mmu:17758"/>
<dbReference type="UCSC" id="uc009rsz.3">
    <molecule id="P27546-2"/>
    <property type="organism name" value="mouse"/>
</dbReference>
<dbReference type="UCSC" id="uc009rta.3">
    <molecule id="P27546-1"/>
    <property type="organism name" value="mouse"/>
</dbReference>
<dbReference type="UCSC" id="uc009rtb.3">
    <molecule id="P27546-3"/>
    <property type="organism name" value="mouse"/>
</dbReference>
<dbReference type="AGR" id="MGI:97178"/>
<dbReference type="CTD" id="4134"/>
<dbReference type="MGI" id="MGI:97178">
    <property type="gene designation" value="Map4"/>
</dbReference>
<dbReference type="VEuPathDB" id="HostDB:ENSMUSG00000032479"/>
<dbReference type="eggNOG" id="KOG2418">
    <property type="taxonomic scope" value="Eukaryota"/>
</dbReference>
<dbReference type="GeneTree" id="ENSGT00940000164123"/>
<dbReference type="HOGENOM" id="CLU_043626_0_0_1"/>
<dbReference type="InParanoid" id="P27546"/>
<dbReference type="OMA" id="VESHHAM"/>
<dbReference type="PhylomeDB" id="P27546"/>
<dbReference type="BioGRID-ORCS" id="17758">
    <property type="hits" value="4 hits in 75 CRISPR screens"/>
</dbReference>
<dbReference type="ChiTaRS" id="Map4">
    <property type="organism name" value="mouse"/>
</dbReference>
<dbReference type="PRO" id="PR:P27546"/>
<dbReference type="Proteomes" id="UP000000589">
    <property type="component" value="Chromosome 9"/>
</dbReference>
<dbReference type="RNAct" id="P27546">
    <property type="molecule type" value="protein"/>
</dbReference>
<dbReference type="Bgee" id="ENSMUSG00000032479">
    <property type="expression patterns" value="Expressed in retinal neural layer and 270 other cell types or tissues"/>
</dbReference>
<dbReference type="ExpressionAtlas" id="P27546">
    <property type="expression patterns" value="baseline and differential"/>
</dbReference>
<dbReference type="GO" id="GO:0005737">
    <property type="term" value="C:cytoplasm"/>
    <property type="evidence" value="ECO:0007669"/>
    <property type="project" value="UniProtKB-KW"/>
</dbReference>
<dbReference type="GO" id="GO:0005874">
    <property type="term" value="C:microtubule"/>
    <property type="evidence" value="ECO:0007669"/>
    <property type="project" value="UniProtKB-KW"/>
</dbReference>
<dbReference type="GO" id="GO:0005815">
    <property type="term" value="C:microtubule organizing center"/>
    <property type="evidence" value="ECO:0007669"/>
    <property type="project" value="UniProtKB-SubCell"/>
</dbReference>
<dbReference type="GO" id="GO:0072686">
    <property type="term" value="C:mitotic spindle"/>
    <property type="evidence" value="ECO:0000266"/>
    <property type="project" value="MGI"/>
</dbReference>
<dbReference type="GO" id="GO:0014069">
    <property type="term" value="C:postsynaptic density"/>
    <property type="evidence" value="ECO:0000314"/>
    <property type="project" value="MGI"/>
</dbReference>
<dbReference type="GO" id="GO:0008017">
    <property type="term" value="F:microtubule binding"/>
    <property type="evidence" value="ECO:0000314"/>
    <property type="project" value="MGI"/>
</dbReference>
<dbReference type="GO" id="GO:0051301">
    <property type="term" value="P:cell division"/>
    <property type="evidence" value="ECO:0000266"/>
    <property type="project" value="MGI"/>
</dbReference>
<dbReference type="GO" id="GO:0051294">
    <property type="term" value="P:establishment of spindle orientation"/>
    <property type="evidence" value="ECO:0000314"/>
    <property type="project" value="MGI"/>
</dbReference>
<dbReference type="GO" id="GO:0000226">
    <property type="term" value="P:microtubule cytoskeleton organization"/>
    <property type="evidence" value="ECO:0000314"/>
    <property type="project" value="ARUK-UCL"/>
</dbReference>
<dbReference type="GO" id="GO:0051012">
    <property type="term" value="P:microtubule sliding"/>
    <property type="evidence" value="ECO:0000314"/>
    <property type="project" value="MGI"/>
</dbReference>
<dbReference type="GO" id="GO:0007052">
    <property type="term" value="P:mitotic spindle organization"/>
    <property type="evidence" value="ECO:0000314"/>
    <property type="project" value="MGI"/>
</dbReference>
<dbReference type="InterPro" id="IPR027324">
    <property type="entry name" value="MAP2/MAP4/Tau"/>
</dbReference>
<dbReference type="InterPro" id="IPR001084">
    <property type="entry name" value="MAP_tubulin-bd_rpt"/>
</dbReference>
<dbReference type="PANTHER" id="PTHR11501">
    <property type="entry name" value="MICROTUBULE-ASSOCIATED PROTEIN"/>
    <property type="match status" value="1"/>
</dbReference>
<dbReference type="PANTHER" id="PTHR11501:SF16">
    <property type="entry name" value="MICROTUBULE-ASSOCIATED PROTEIN 4"/>
    <property type="match status" value="1"/>
</dbReference>
<dbReference type="Pfam" id="PF00418">
    <property type="entry name" value="Tubulin-binding"/>
    <property type="match status" value="4"/>
</dbReference>
<dbReference type="PROSITE" id="PS00229">
    <property type="entry name" value="TAU_MAP_1"/>
    <property type="match status" value="4"/>
</dbReference>
<dbReference type="PROSITE" id="PS51491">
    <property type="entry name" value="TAU_MAP_2"/>
    <property type="match status" value="4"/>
</dbReference>
<sequence>MADLSLVDALTEPPPEIEGEIKRDFMAALEAEPYDDIVGETVEKTEFIPLLDGDEKTGNSESKKKPCLDTSQVEGIPSSKPTLLANGDHGMEGNNTAGSPTDFLEERVDYPDYQSSQNWPEDASFCFQPQQVLDTDQAEPFNEHRDDGLADLLFVSSGPTNASAFTERDNPSEDSYGMLPCDSFASTAVVSQEWSVGAPNSPCSESCVSPEVTIETLQPATELSKAAEVESVKEQLPAKALETMAEQTTDVVHSPSTDTTPGPDTEAALAKDIEEITKPDVILANVTQPSTESDMFLAQDMELLTGTEAAHANNIILPTEPDESSTKDVAPPMEEEIVPGNDTTSPKETETTLPIKMDLAPPEDVLLTKETELAPAKGMVSLSEIEEALAKNDESSAEIPVAQETVVSETEVVLATEVVLPSDPITTLTKDVTLPLEAERPLVTDMTPSLETEMTLGKETAPPTETNLGMAKDMSPLPESEVTLGKDVVILPETKVAEFNNVTPLSEEEVTSVKDMSPSAETEAPLAKNADLHSGTELIVDNSMAPASDLALPLETKVATVPIKDKGTVQTEEKPREDSQLASMQHKGQSTVPPCTASPEPVKAAEQMSTLPIDAPSPLENLEQKETPGSQPSEPCSGVSRQEEAKAAVGVTGNDITTPPNKEPPPSPEKKAKPLATTQPAKTSTSKAKTQPTSLPKQPAPTTSGGLNKKPMSLASGSVPAAPHKRPAAATATARPSTLPARDVKPKPITEAKVAEKRTSPSKPSSAPALKPGPKTTPTVSKATSPSTLVSTGPSSRSPATTLPKRPTSIKTEGKPADVKRMTAKSASADLSRSKTTSASSVKRNTTPTGAAPPAGMTSTRVKPMSAPSRSSGALSVDKKPTSTKPSSSAPRVSRLATTVSAPDLKSVRSKVGSTENIKHQPGGGRAKVEKKTEAATTAGKPEPNAVTKAAGSIASAQKPPAGKVQIVSKKVSYSHIQSKCGSKDNIKHVPGGGNVQIQNKKVDISKVSSKCGSKANIKHKPGGGDVKIESQKLNFKEKAQAKVGSLDNVGHLPAGGAVKTEGGGSEALPCPGPPAGEEPVIPEAAPDAGAPTSASGLSGHTTLSGGGDQREPQTLDSQIQETSI</sequence>
<evidence type="ECO:0000250" key="1"/>
<evidence type="ECO:0000250" key="2">
    <source>
        <dbReference type="UniProtKB" id="P27816"/>
    </source>
</evidence>
<evidence type="ECO:0000250" key="3">
    <source>
        <dbReference type="UniProtKB" id="Q5M7W5"/>
    </source>
</evidence>
<evidence type="ECO:0000256" key="4">
    <source>
        <dbReference type="SAM" id="MobiDB-lite"/>
    </source>
</evidence>
<evidence type="ECO:0000269" key="5">
    <source>
    </source>
</evidence>
<evidence type="ECO:0000303" key="6">
    <source>
    </source>
</evidence>
<evidence type="ECO:0000303" key="7">
    <source>
    </source>
</evidence>
<evidence type="ECO:0000305" key="8"/>
<evidence type="ECO:0007744" key="9">
    <source>
    </source>
</evidence>
<evidence type="ECO:0007744" key="10">
    <source>
    </source>
</evidence>
<evidence type="ECO:0007744" key="11">
    <source>
    </source>
</evidence>
<evidence type="ECO:0007744" key="12">
    <source>
    </source>
</evidence>
<evidence type="ECO:0007744" key="13">
    <source>
    </source>
</evidence>
<accession>P27546</accession>
<accession>Q05BJ2</accession>
<accession>Q3UIS2</accession>
<accession>Q3UUH5</accession>
<accession>Q3UY36</accession>
<accession>Q7TPC6</accession>
<accession>Q7TPD4</accession>
<accession>Q80YQ5</accession>
<accession>Q8CFP5</accession>
<keyword id="KW-0007">Acetylation</keyword>
<keyword id="KW-0025">Alternative splicing</keyword>
<keyword id="KW-0963">Cytoplasm</keyword>
<keyword id="KW-0206">Cytoskeleton</keyword>
<keyword id="KW-1017">Isopeptide bond</keyword>
<keyword id="KW-0493">Microtubule</keyword>
<keyword id="KW-0597">Phosphoprotein</keyword>
<keyword id="KW-1185">Reference proteome</keyword>
<keyword id="KW-0677">Repeat</keyword>
<keyword id="KW-0832">Ubl conjugation</keyword>
<protein>
    <recommendedName>
        <fullName>Microtubule-associated protein 4</fullName>
        <shortName>MAP-4</shortName>
    </recommendedName>
</protein>
<gene>
    <name type="primary">Map4</name>
    <name type="synonym">Mtap4</name>
</gene>
<name>MAP4_MOUSE</name>